<proteinExistence type="predicted"/>
<keyword id="KW-0472">Membrane</keyword>
<keyword id="KW-1185">Reference proteome</keyword>
<keyword id="KW-0812">Transmembrane</keyword>
<keyword id="KW-1133">Transmembrane helix</keyword>
<sequence>MIAAVIPIFVISLSNISHIILAIFFFPSIVEFLDDLYWGFTYRSWSPIARQLELGPNIYIHHSKVSILMDKADLYEKNQSRKDILNYYREEDKDFEQYLNFRENRKMLQQAFESGTLIRKQNYRARIHERMVEQPVTEKKELLRSR</sequence>
<comment type="subcellular location">
    <subcellularLocation>
        <location evidence="2">Membrane</location>
        <topology evidence="2">Single-pass membrane protein</topology>
    </subcellularLocation>
</comment>
<dbReference type="EMBL" id="Z27079">
    <property type="protein sequence ID" value="CAA81591.2"/>
    <property type="molecule type" value="Genomic_DNA"/>
</dbReference>
<dbReference type="PIR" id="S41004">
    <property type="entry name" value="S41004"/>
</dbReference>
<dbReference type="RefSeq" id="NP_499154.2">
    <property type="nucleotide sequence ID" value="NM_066753.4"/>
</dbReference>
<dbReference type="SMR" id="P34557"/>
<dbReference type="BioGRID" id="52813">
    <property type="interactions" value="1"/>
</dbReference>
<dbReference type="FunCoup" id="P34557">
    <property type="interactions" value="1341"/>
</dbReference>
<dbReference type="STRING" id="6239.T05G5.4.1"/>
<dbReference type="PaxDb" id="6239-T05G5.4"/>
<dbReference type="EnsemblMetazoa" id="T05G5.4.1">
    <property type="protein sequence ID" value="T05G5.4.1"/>
    <property type="gene ID" value="WBGene00011499"/>
</dbReference>
<dbReference type="GeneID" id="188141"/>
<dbReference type="KEGG" id="cel:CELE_T05G5.4"/>
<dbReference type="UCSC" id="T05G5.4">
    <property type="organism name" value="c. elegans"/>
</dbReference>
<dbReference type="AGR" id="WB:WBGene00011499"/>
<dbReference type="CTD" id="188141"/>
<dbReference type="WormBase" id="T05G5.4">
    <property type="protein sequence ID" value="CE43884"/>
    <property type="gene ID" value="WBGene00011499"/>
</dbReference>
<dbReference type="eggNOG" id="ENOG502TIFK">
    <property type="taxonomic scope" value="Eukaryota"/>
</dbReference>
<dbReference type="HOGENOM" id="CLU_134614_0_0_1"/>
<dbReference type="InParanoid" id="P34557"/>
<dbReference type="OMA" id="HERMIDQ"/>
<dbReference type="OrthoDB" id="5782387at2759"/>
<dbReference type="PRO" id="PR:P34557"/>
<dbReference type="Proteomes" id="UP000001940">
    <property type="component" value="Chromosome III"/>
</dbReference>
<dbReference type="Bgee" id="WBGene00011499">
    <property type="expression patterns" value="Expressed in adult organism and 2 other cell types or tissues"/>
</dbReference>
<dbReference type="GO" id="GO:0016020">
    <property type="term" value="C:membrane"/>
    <property type="evidence" value="ECO:0007669"/>
    <property type="project" value="UniProtKB-SubCell"/>
</dbReference>
<evidence type="ECO:0000255" key="1"/>
<evidence type="ECO:0000305" key="2"/>
<accession>P34557</accession>
<feature type="chain" id="PRO_0000065445" description="Uncharacterized protein T05G5.4">
    <location>
        <begin position="1"/>
        <end position="146"/>
    </location>
</feature>
<feature type="transmembrane region" description="Helical" evidence="1">
    <location>
        <begin position="6"/>
        <end position="26"/>
    </location>
</feature>
<gene>
    <name type="ORF">T05G5.4</name>
</gene>
<name>YNP4_CAEEL</name>
<reference key="1">
    <citation type="journal article" date="1994" name="Nature">
        <title>2.2 Mb of contiguous nucleotide sequence from chromosome III of C. elegans.</title>
        <authorList>
            <person name="Wilson R."/>
            <person name="Ainscough R."/>
            <person name="Anderson K."/>
            <person name="Baynes C."/>
            <person name="Berks M."/>
            <person name="Bonfield J."/>
            <person name="Burton J."/>
            <person name="Connell M."/>
            <person name="Copsey T."/>
            <person name="Cooper J."/>
            <person name="Coulson A."/>
            <person name="Craxton M."/>
            <person name="Dear S."/>
            <person name="Du Z."/>
            <person name="Durbin R."/>
            <person name="Favello A."/>
            <person name="Fraser A."/>
            <person name="Fulton L."/>
            <person name="Gardner A."/>
            <person name="Green P."/>
            <person name="Hawkins T."/>
            <person name="Hillier L."/>
            <person name="Jier M."/>
            <person name="Johnston L."/>
            <person name="Jones M."/>
            <person name="Kershaw J."/>
            <person name="Kirsten J."/>
            <person name="Laisster N."/>
            <person name="Latreille P."/>
            <person name="Lightning J."/>
            <person name="Lloyd C."/>
            <person name="Mortimore B."/>
            <person name="O'Callaghan M."/>
            <person name="Parsons J."/>
            <person name="Percy C."/>
            <person name="Rifken L."/>
            <person name="Roopra A."/>
            <person name="Saunders D."/>
            <person name="Shownkeen R."/>
            <person name="Sims M."/>
            <person name="Smaldon N."/>
            <person name="Smith A."/>
            <person name="Smith M."/>
            <person name="Sonnhammer E."/>
            <person name="Staden R."/>
            <person name="Sulston J."/>
            <person name="Thierry-Mieg J."/>
            <person name="Thomas K."/>
            <person name="Vaudin M."/>
            <person name="Vaughan K."/>
            <person name="Waterston R."/>
            <person name="Watson A."/>
            <person name="Weinstock L."/>
            <person name="Wilkinson-Sproat J."/>
            <person name="Wohldman P."/>
        </authorList>
    </citation>
    <scope>NUCLEOTIDE SEQUENCE [LARGE SCALE GENOMIC DNA]</scope>
    <source>
        <strain>Bristol N2</strain>
    </source>
</reference>
<reference key="2">
    <citation type="journal article" date="1998" name="Science">
        <title>Genome sequence of the nematode C. elegans: a platform for investigating biology.</title>
        <authorList>
            <consortium name="The C. elegans sequencing consortium"/>
        </authorList>
    </citation>
    <scope>NUCLEOTIDE SEQUENCE [LARGE SCALE GENOMIC DNA]</scope>
    <source>
        <strain>Bristol N2</strain>
    </source>
</reference>
<protein>
    <recommendedName>
        <fullName>Uncharacterized protein T05G5.4</fullName>
    </recommendedName>
</protein>
<organism>
    <name type="scientific">Caenorhabditis elegans</name>
    <dbReference type="NCBI Taxonomy" id="6239"/>
    <lineage>
        <taxon>Eukaryota</taxon>
        <taxon>Metazoa</taxon>
        <taxon>Ecdysozoa</taxon>
        <taxon>Nematoda</taxon>
        <taxon>Chromadorea</taxon>
        <taxon>Rhabditida</taxon>
        <taxon>Rhabditina</taxon>
        <taxon>Rhabditomorpha</taxon>
        <taxon>Rhabditoidea</taxon>
        <taxon>Rhabditidae</taxon>
        <taxon>Peloderinae</taxon>
        <taxon>Caenorhabditis</taxon>
    </lineage>
</organism>